<accession>Q5R649</accession>
<organism>
    <name type="scientific">Pongo abelii</name>
    <name type="common">Sumatran orangutan</name>
    <name type="synonym">Pongo pygmaeus abelii</name>
    <dbReference type="NCBI Taxonomy" id="9601"/>
    <lineage>
        <taxon>Eukaryota</taxon>
        <taxon>Metazoa</taxon>
        <taxon>Chordata</taxon>
        <taxon>Craniata</taxon>
        <taxon>Vertebrata</taxon>
        <taxon>Euteleostomi</taxon>
        <taxon>Mammalia</taxon>
        <taxon>Eutheria</taxon>
        <taxon>Euarchontoglires</taxon>
        <taxon>Primates</taxon>
        <taxon>Haplorrhini</taxon>
        <taxon>Catarrhini</taxon>
        <taxon>Hominidae</taxon>
        <taxon>Pongo</taxon>
    </lineage>
</organism>
<feature type="initiator methionine" description="Removed" evidence="2">
    <location>
        <position position="1"/>
    </location>
</feature>
<feature type="chain" id="PRO_0000281037" description="DNA damage-binding protein 1">
    <location>
        <begin position="2"/>
        <end position="1140"/>
    </location>
</feature>
<feature type="region of interest" description="Interaction with CDT1" evidence="1">
    <location>
        <begin position="2"/>
        <end position="768"/>
    </location>
</feature>
<feature type="region of interest" description="WD repeat beta-propeller A" evidence="1">
    <location>
        <begin position="13"/>
        <end position="356"/>
    </location>
</feature>
<feature type="region of interest" description="WD repeat beta-propeller B; Interaction with CUL4A" evidence="1">
    <location>
        <begin position="391"/>
        <end position="708"/>
    </location>
</feature>
<feature type="region of interest" description="WD repeat beta-propeller C" evidence="1">
    <location>
        <begin position="709"/>
        <end position="1043"/>
    </location>
</feature>
<feature type="region of interest" description="Interaction with CDT1 and CUL4A" evidence="1">
    <location>
        <begin position="771"/>
        <end position="1140"/>
    </location>
</feature>
<feature type="modified residue" description="N-acetylserine" evidence="2">
    <location>
        <position position="2"/>
    </location>
</feature>
<feature type="modified residue" description="N6-acetyllysine" evidence="2">
    <location>
        <position position="1067"/>
    </location>
</feature>
<feature type="modified residue" description="Phosphothreonine" evidence="4">
    <location>
        <position position="1125"/>
    </location>
</feature>
<feature type="cross-link" description="Glycyl lysine isopeptide (Lys-Gly) (interchain with G-Cter in SUMO2)" evidence="2">
    <location>
        <position position="1121"/>
    </location>
</feature>
<evidence type="ECO:0000250" key="1"/>
<evidence type="ECO:0000250" key="2">
    <source>
        <dbReference type="UniProtKB" id="Q16531"/>
    </source>
</evidence>
<evidence type="ECO:0000250" key="3">
    <source>
        <dbReference type="UniProtKB" id="Q3U1J4"/>
    </source>
</evidence>
<evidence type="ECO:0000250" key="4">
    <source>
        <dbReference type="UniProtKB" id="Q9ESW0"/>
    </source>
</evidence>
<evidence type="ECO:0000305" key="5"/>
<protein>
    <recommendedName>
        <fullName>DNA damage-binding protein 1</fullName>
    </recommendedName>
    <alternativeName>
        <fullName>Damage-specific DNA-binding protein 1</fullName>
    </alternativeName>
</protein>
<name>DDB1_PONAB</name>
<gene>
    <name type="primary">DDB1</name>
</gene>
<sequence>MSYNYVVTAQKPTAVNGCVTGHFTSAEDLNLLIAKNTRLEIYVVTAEGLRPVKEVGMYGKIAVMELFRPKGESKDLLFILTAKYNVCILEYKQSGESIDIITRAHGNVQDRIGRPSETGIIGIIDPECRMIGLRLYDGLFKVIPLDRDNKELKAFNIRLEELHVIDVKFLYGCQAPTICFVYQDPQGRHVKTYEVSLREKEFNKGPWKQENVEAEASMVIAVPEPFGGAIIIGQESITYHNGDKYLAIAPPIIKQSTIVCHNRVDPNGSRYLLGDMEGRLFMLLLEKEEQMDGTVTLKDLRVELLGETSIAECLTYLDNGVVFVGSRLGDSQLVKLNVDSNEQGSYVVAMETFTNLGPIVDMCVVDLERQGQGQLVTCSGAFKEGSLRIIRNGIGIHEHASIDLPGIKGLWPLRSDPNRETDDTLVLSFVGQTRVLMLNGEEVEETELMGFVDDQQTFFCGNVAHQQLIQITSASVRLVSQEPKALVSEWKEPQAKNISVASCNSSQVVVAVGRALYYLQIHPQELRQISHTEMEHEVACLDITPLGDSNGLSPLCAIGLWTDISARILKLPSFELLHKEMLGGEIIPRSILMTTFESSHYLLCALGDGALFYFGLNIETGLLSDRKKVTLGTQPTVLRTFRSLSTTNVFACSDRPTVIYSSNHKLVFSNVNLKEVNYMCPLNSDGYPDSLALANNSTLTIGTIDEIQKLHIRTVPLYESPRKICYQEVSQCFGVLSSRIEVQDTSGGTTALRPSASTQALSSSVSSSKLFSSSTAPHETSFGEEVEVHNLLIIDQHTFEVLHAHQFLQNEYALSLVSCKLGKDPNTYFIVGTAMVYPEEAEPKQGRIVVFQYSDGKLQTVAEKEVKGAVYPMVEFNGKLLASINSTVRLYEWTTEKELRTECNHYNNIMALYLKTKGDFILVGDLMRSVLLLAYKPMEGNFEEIARDFNPNWMSAVEILDDDNFLGAENAFNLFVCQKDSAATTDEERQHLQEVGLFHLGEFVNVFCHGSLVMQNLGETSTPTQGSVLFGTVNGMIGLVTSLSESWYNLLLDMQNRLNKVIKSVGKIEHSFWRSFHTERKTEPATGFIDGDLIESFLDISRPKMQEVVANLQYDDGSGMKREATADDLIKVVEELTRIH</sequence>
<keyword id="KW-0007">Acetylation</keyword>
<keyword id="KW-0090">Biological rhythms</keyword>
<keyword id="KW-0963">Cytoplasm</keyword>
<keyword id="KW-0227">DNA damage</keyword>
<keyword id="KW-0234">DNA repair</keyword>
<keyword id="KW-0238">DNA-binding</keyword>
<keyword id="KW-1017">Isopeptide bond</keyword>
<keyword id="KW-0539">Nucleus</keyword>
<keyword id="KW-0597">Phosphoprotein</keyword>
<keyword id="KW-1185">Reference proteome</keyword>
<keyword id="KW-0677">Repeat</keyword>
<keyword id="KW-0832">Ubl conjugation</keyword>
<keyword id="KW-0833">Ubl conjugation pathway</keyword>
<proteinExistence type="evidence at transcript level"/>
<reference key="1">
    <citation type="submission" date="2004-11" db="EMBL/GenBank/DDBJ databases">
        <authorList>
            <consortium name="The German cDNA consortium"/>
        </authorList>
    </citation>
    <scope>NUCLEOTIDE SEQUENCE [LARGE SCALE MRNA]</scope>
    <source>
        <tissue>Brain cortex</tissue>
    </source>
</reference>
<dbReference type="EMBL" id="CR860647">
    <property type="protein sequence ID" value="CAH92767.1"/>
    <property type="molecule type" value="mRNA"/>
</dbReference>
<dbReference type="RefSeq" id="NP_001126613.1">
    <property type="nucleotide sequence ID" value="NM_001133141.1"/>
</dbReference>
<dbReference type="SMR" id="Q5R649"/>
<dbReference type="FunCoup" id="Q5R649">
    <property type="interactions" value="3152"/>
</dbReference>
<dbReference type="STRING" id="9601.ENSPPYP00000003683"/>
<dbReference type="GeneID" id="100173610"/>
<dbReference type="KEGG" id="pon:100173610"/>
<dbReference type="CTD" id="1642"/>
<dbReference type="eggNOG" id="KOG1897">
    <property type="taxonomic scope" value="Eukaryota"/>
</dbReference>
<dbReference type="InParanoid" id="Q5R649"/>
<dbReference type="OrthoDB" id="433457at2759"/>
<dbReference type="UniPathway" id="UPA00143"/>
<dbReference type="Proteomes" id="UP000001595">
    <property type="component" value="Unplaced"/>
</dbReference>
<dbReference type="GO" id="GO:0080008">
    <property type="term" value="C:Cul4-RING E3 ubiquitin ligase complex"/>
    <property type="evidence" value="ECO:0000250"/>
    <property type="project" value="UniProtKB"/>
</dbReference>
<dbReference type="GO" id="GO:0031464">
    <property type="term" value="C:Cul4A-RING E3 ubiquitin ligase complex"/>
    <property type="evidence" value="ECO:0000250"/>
    <property type="project" value="UniProtKB"/>
</dbReference>
<dbReference type="GO" id="GO:0031465">
    <property type="term" value="C:Cul4B-RING E3 ubiquitin ligase complex"/>
    <property type="evidence" value="ECO:0000250"/>
    <property type="project" value="UniProtKB"/>
</dbReference>
<dbReference type="GO" id="GO:0005737">
    <property type="term" value="C:cytoplasm"/>
    <property type="evidence" value="ECO:0000250"/>
    <property type="project" value="UniProtKB"/>
</dbReference>
<dbReference type="GO" id="GO:0005634">
    <property type="term" value="C:nucleus"/>
    <property type="evidence" value="ECO:0000250"/>
    <property type="project" value="UniProtKB"/>
</dbReference>
<dbReference type="GO" id="GO:0003677">
    <property type="term" value="F:DNA binding"/>
    <property type="evidence" value="ECO:0007669"/>
    <property type="project" value="UniProtKB-KW"/>
</dbReference>
<dbReference type="GO" id="GO:0006281">
    <property type="term" value="P:DNA repair"/>
    <property type="evidence" value="ECO:0007669"/>
    <property type="project" value="UniProtKB-KW"/>
</dbReference>
<dbReference type="GO" id="GO:0045722">
    <property type="term" value="P:positive regulation of gluconeogenesis"/>
    <property type="evidence" value="ECO:0000250"/>
    <property type="project" value="UniProtKB"/>
</dbReference>
<dbReference type="GO" id="GO:0043161">
    <property type="term" value="P:proteasome-mediated ubiquitin-dependent protein catabolic process"/>
    <property type="evidence" value="ECO:0000250"/>
    <property type="project" value="UniProtKB"/>
</dbReference>
<dbReference type="GO" id="GO:0016567">
    <property type="term" value="P:protein ubiquitination"/>
    <property type="evidence" value="ECO:0000250"/>
    <property type="project" value="UniProtKB"/>
</dbReference>
<dbReference type="GO" id="GO:0042752">
    <property type="term" value="P:regulation of circadian rhythm"/>
    <property type="evidence" value="ECO:0000250"/>
    <property type="project" value="UniProtKB"/>
</dbReference>
<dbReference type="GO" id="GO:0048511">
    <property type="term" value="P:rhythmic process"/>
    <property type="evidence" value="ECO:0007669"/>
    <property type="project" value="UniProtKB-KW"/>
</dbReference>
<dbReference type="GO" id="GO:0006511">
    <property type="term" value="P:ubiquitin-dependent protein catabolic process"/>
    <property type="evidence" value="ECO:0000250"/>
    <property type="project" value="UniProtKB"/>
</dbReference>
<dbReference type="FunFam" id="1.10.150.910:FF:000001">
    <property type="entry name" value="DNA damage-binding protein 1"/>
    <property type="match status" value="1"/>
</dbReference>
<dbReference type="FunFam" id="2.130.10.10:FF:000073">
    <property type="entry name" value="DNA damage-binding protein 1"/>
    <property type="match status" value="1"/>
</dbReference>
<dbReference type="FunFam" id="2.130.10.10:FF:002576">
    <property type="entry name" value="DNA damage-binding protein 1"/>
    <property type="match status" value="1"/>
</dbReference>
<dbReference type="FunFam" id="2.130.10.10:FF:002484">
    <property type="entry name" value="DNA damage-binding protein 1 isoform X3"/>
    <property type="match status" value="1"/>
</dbReference>
<dbReference type="Gene3D" id="1.10.150.910">
    <property type="match status" value="1"/>
</dbReference>
<dbReference type="Gene3D" id="2.130.10.10">
    <property type="entry name" value="YVTN repeat-like/Quinoprotein amine dehydrogenase"/>
    <property type="match status" value="3"/>
</dbReference>
<dbReference type="InterPro" id="IPR018846">
    <property type="entry name" value="Beta-prop_RSE1/DDB1/CPSF1_1st"/>
</dbReference>
<dbReference type="InterPro" id="IPR004871">
    <property type="entry name" value="Cleavage/polyA-sp_fac_asu_C"/>
</dbReference>
<dbReference type="InterPro" id="IPR011047">
    <property type="entry name" value="Quinoprotein_ADH-like_sf"/>
</dbReference>
<dbReference type="InterPro" id="IPR050358">
    <property type="entry name" value="RSE1/DDB1/CFT1/CPSF1"/>
</dbReference>
<dbReference type="InterPro" id="IPR015943">
    <property type="entry name" value="WD40/YVTN_repeat-like_dom_sf"/>
</dbReference>
<dbReference type="PANTHER" id="PTHR10644">
    <property type="entry name" value="DNA REPAIR/RNA PROCESSING CPSF FAMILY"/>
    <property type="match status" value="1"/>
</dbReference>
<dbReference type="Pfam" id="PF10433">
    <property type="entry name" value="Beta-prop_RSE1_1st"/>
    <property type="match status" value="1"/>
</dbReference>
<dbReference type="Pfam" id="PF23726">
    <property type="entry name" value="Beta-prop_RSE1_2nd"/>
    <property type="match status" value="1"/>
</dbReference>
<dbReference type="Pfam" id="PF03178">
    <property type="entry name" value="CPSF_A"/>
    <property type="match status" value="1"/>
</dbReference>
<dbReference type="SUPFAM" id="SSF50998">
    <property type="entry name" value="Quinoprotein alcohol dehydrogenase-like"/>
    <property type="match status" value="1"/>
</dbReference>
<comment type="function">
    <text evidence="2 3">Protein, which is both involved in DNA repair and protein ubiquitination, as part of the UV-DDB complex and DCX (DDB1-CUL4-X-box) complexes, respectively. Core component of the UV-DDB complex (UV-damaged DNA-binding protein complex), a complex that recognizes UV-induced DNA damage and recruit proteins of the nucleotide excision repair pathway (the NER pathway) to initiate DNA repair. The UV-DDB complex preferentially binds to cyclobutane pyrimidine dimers (CPD), 6-4 photoproducts (6-4 PP), apurinic sites and short mismatches. Also functions as a component of numerous distinct DCX (DDB1-CUL4-X-box) E3 ubiquitin-protein ligase complexes which mediate the ubiquitination and subsequent proteasomal degradation of target proteins. The functional specificity of the DCX E3 ubiquitin-protein ligase complex is determined by the variable substrate recognition component recruited by DDB1. DCX(DDB2) (also known as DDB1-CUL4-ROC1, CUL4-DDB-ROC1 and CUL4-DDB-RBX1) may ubiquitinate histone H2A, histone H3 and histone H4 at sites of UV-induced DNA damage. The ubiquitination of histones may facilitate their removal from the nucleosome and promote subsequent DNA repair. DCX(DDB2) also ubiquitinates XPC, which may enhance DNA-binding by XPC and promote NER. DCX(DTL) plays a role in PCNA-dependent polyubiquitination of CDT1 and MDM2-dependent ubiquitination of TP53 in response to radiation-induced DNA damage and during DNA replication. DCX(ERCC8) (the CSA complex) plays a role in transcription-coupled repair (TCR). The DDB1-CUL4A-DTL E3 ligase complex regulates the circadian clock function by mediating the ubiquitination and degradation of CRY1 (By similarity). DDB1-mediated CRY1 degradation promotes FOXO1 protein stability and FOXO1-mediated gluconeogenesis in the liver (By similarity). By acting on TET dioxygenses, essential for oocyte maintenance at the primordial follicle stage, hence essential for female fertility (By similarity). Maternal factor required for proper zygotic genome activation and genome reprogramming (By similarity).</text>
</comment>
<comment type="pathway">
    <text evidence="2">Protein modification; protein ubiquitination.</text>
</comment>
<comment type="subunit">
    <text evidence="2 3">Component of the UV-DDB complex which includes DDB1 and DDB2; the heterodimer dimerizes to give rise to a heterotetramer when bound to damaged DNA. The UV-DDB complex interacts with monoubiquitinated histone H2A and binds to XPC via the DDB2 subunit. Component of numerous DCX (DDB1-CUL4-X-box) E3 ubiquitin-protein ligase complexes which consist of a core of DDB1, CUL4A or CUL4B and RBX1. DDB1 may recruit specific substrate targeting subunits to the DCX complex. These substrate targeting subunits are generally known as DCAF (DDB1- and CUL4-associated factor) or CDW (CUL4-DDB1-associated WD40-repeat) proteins. Interacts with AMBRA1, ATG16L1, BTRC, CRBN, DCAF1, DCAF4, DCAF5, DCAF6, DCAF7, DCAF8, DCAF9, DCAF10, DCAF11, DCAF12, DCAF15, DCAF16, DCAF17, DDA1, DET1, DTL, ERCC8, FBXW5, FBXW8, GRWD1, KATNB1, NLE1, NUP43, PAFAH1B1, PHIP, PWP1, RBBP4, RBBP5, RBBP7, COP1, SNRNP40, DCAF1, WDR5, WDR5B, WDR12, WDR26, WDR39, WDR42, WDR53, WDR59, WDR61, WSB1, WSB2, LRWD1 and WDTC1. DCX complexes may associate with the COP9 signalosome, and this inhibits the E3 ubiquitin-protein ligase activity of the complex. Interacts with NF2, TSC1 and TSC2. Interacts with AGO1 and AGO2. Associates with the E3 ligase complex containing DYRK2, EDD/UBR5, DDB1 and DCAF1 proteins (EDVP complex). Interacts directly with DYRK2. DCX(DTL) complex interacts with FBXO11; does not ubiquitinate and degradate FBXO11. Interacts with TRPC4AP (By similarity). Interacts with CRY1 and CRY2 (By similarity). The DDB1-CUL4A complex interacts with CRY1 (By similarity). May also interact with DCUN1D1, DCUN1D2, DCUN1D3 and DCUN1D5 (By similarity). Component of the DCX(DCAF13) E3 ubiquitin ligase complex, at least composed of CUL4 (CUL4A or CUL4B), DDB1, DCAF13 and RBX1. Interacts with DCAF13 (via WD40 domain) (By similarity).</text>
</comment>
<comment type="subcellular location">
    <subcellularLocation>
        <location evidence="2">Cytoplasm</location>
    </subcellularLocation>
    <subcellularLocation>
        <location evidence="2">Nucleus</location>
    </subcellularLocation>
    <text evidence="2 3">Primarily cytoplasmic. Translocates to the nucleus following UV irradiation and subsequently accumulates at sites of DNA damage. More concentrated in nuclei than in cytoplasm in germinal vesicle (GV) stage oocytes, zygotes and the 2-cell stage, but distributed in the cytoplasm at the MII-stage oocytes (By similarity).</text>
</comment>
<comment type="domain">
    <text evidence="2">The core of the protein consists of three WD40 beta-propeller domains.</text>
</comment>
<comment type="PTM">
    <text evidence="3">Phosphorylated by ABL1.</text>
</comment>
<comment type="PTM">
    <text evidence="2">Ubiquitinated by CUL4A. Subsequently degraded by ubiquitin-dependent proteolysis.</text>
</comment>
<comment type="PTM">
    <text evidence="2">Acetylated, promoting interaction with CUL4 (CUL4A or CUL4B) and subsequent formation of DCX (DDB1-CUL4-X-box) E3 ubiquitin-protein ligase complexes. Deacetylation by SIRT7 impairs the interaction with CUL4 (CUL4A or CUL4B) and formation of DCX (DDB1-CUL4-X-box) E3 ubiquitin-protein ligase complexes.</text>
</comment>
<comment type="similarity">
    <text evidence="5">Belongs to the DDB1 family.</text>
</comment>